<accession>Q2T1B0</accession>
<organism>
    <name type="scientific">Burkholderia thailandensis (strain ATCC 700388 / DSM 13276 / CCUG 48851 / CIP 106301 / E264)</name>
    <dbReference type="NCBI Taxonomy" id="271848"/>
    <lineage>
        <taxon>Bacteria</taxon>
        <taxon>Pseudomonadati</taxon>
        <taxon>Pseudomonadota</taxon>
        <taxon>Betaproteobacteria</taxon>
        <taxon>Burkholderiales</taxon>
        <taxon>Burkholderiaceae</taxon>
        <taxon>Burkholderia</taxon>
        <taxon>pseudomallei group</taxon>
    </lineage>
</organism>
<name>Y482_BURTA</name>
<evidence type="ECO:0000255" key="1">
    <source>
        <dbReference type="HAMAP-Rule" id="MF_00636"/>
    </source>
</evidence>
<keyword id="KW-0067">ATP-binding</keyword>
<keyword id="KW-0342">GTP-binding</keyword>
<keyword id="KW-0547">Nucleotide-binding</keyword>
<sequence length="297" mass="33117">MRIVLITGISGSGKSVALNALEDAGYYCVDNLPPHVLPELARHLANEGQNRLAVAIDARSSASLDEMPGLIRALSREHDVRVLFLNASTQSLIQRFSETRRRHPLSGSPSHDADVGLLVSLEEAIERERDLVAPLAEFGHQIDTSNLRANVLRTWVKRFIEQKNDDLVLMFESFGFKRGVPLDADFMFDVRALPNPYYDHELRPLTGLDQPVVAFLDALPVVHQMLGDIESFLIKWLPHFREDNRSYLTVAIGCTGGQHRSVFLAETLAARLSRQANVIVRHRDAPVAVDASSRLVT</sequence>
<comment type="function">
    <text evidence="1">Displays ATPase and GTPase activities.</text>
</comment>
<comment type="similarity">
    <text evidence="1">Belongs to the RapZ-like family.</text>
</comment>
<protein>
    <recommendedName>
        <fullName evidence="1">Nucleotide-binding protein BTH_I0482</fullName>
    </recommendedName>
</protein>
<reference key="1">
    <citation type="journal article" date="2005" name="BMC Genomics">
        <title>Bacterial genome adaptation to niches: divergence of the potential virulence genes in three Burkholderia species of different survival strategies.</title>
        <authorList>
            <person name="Kim H.S."/>
            <person name="Schell M.A."/>
            <person name="Yu Y."/>
            <person name="Ulrich R.L."/>
            <person name="Sarria S.H."/>
            <person name="Nierman W.C."/>
            <person name="DeShazer D."/>
        </authorList>
    </citation>
    <scope>NUCLEOTIDE SEQUENCE [LARGE SCALE GENOMIC DNA]</scope>
    <source>
        <strain>ATCC 700388 / DSM 13276 / CCUG 48851 / CIP 106301 / E264</strain>
    </source>
</reference>
<proteinExistence type="inferred from homology"/>
<dbReference type="EMBL" id="CP000086">
    <property type="protein sequence ID" value="ABC37286.1"/>
    <property type="molecule type" value="Genomic_DNA"/>
</dbReference>
<dbReference type="SMR" id="Q2T1B0"/>
<dbReference type="GeneID" id="45120245"/>
<dbReference type="KEGG" id="bte:BTH_I0482"/>
<dbReference type="HOGENOM" id="CLU_059558_1_1_4"/>
<dbReference type="Proteomes" id="UP000001930">
    <property type="component" value="Chromosome I"/>
</dbReference>
<dbReference type="GO" id="GO:0005524">
    <property type="term" value="F:ATP binding"/>
    <property type="evidence" value="ECO:0007669"/>
    <property type="project" value="UniProtKB-UniRule"/>
</dbReference>
<dbReference type="GO" id="GO:0005525">
    <property type="term" value="F:GTP binding"/>
    <property type="evidence" value="ECO:0007669"/>
    <property type="project" value="UniProtKB-UniRule"/>
</dbReference>
<dbReference type="Gene3D" id="3.40.50.300">
    <property type="entry name" value="P-loop containing nucleotide triphosphate hydrolases"/>
    <property type="match status" value="1"/>
</dbReference>
<dbReference type="HAMAP" id="MF_00636">
    <property type="entry name" value="RapZ_like"/>
    <property type="match status" value="1"/>
</dbReference>
<dbReference type="InterPro" id="IPR027417">
    <property type="entry name" value="P-loop_NTPase"/>
</dbReference>
<dbReference type="InterPro" id="IPR005337">
    <property type="entry name" value="RapZ-like"/>
</dbReference>
<dbReference type="InterPro" id="IPR053930">
    <property type="entry name" value="RapZ-like_N"/>
</dbReference>
<dbReference type="InterPro" id="IPR053931">
    <property type="entry name" value="RapZ_C"/>
</dbReference>
<dbReference type="NCBIfam" id="NF003828">
    <property type="entry name" value="PRK05416.1"/>
    <property type="match status" value="1"/>
</dbReference>
<dbReference type="PANTHER" id="PTHR30448">
    <property type="entry name" value="RNASE ADAPTER PROTEIN RAPZ"/>
    <property type="match status" value="1"/>
</dbReference>
<dbReference type="PANTHER" id="PTHR30448:SF0">
    <property type="entry name" value="RNASE ADAPTER PROTEIN RAPZ"/>
    <property type="match status" value="1"/>
</dbReference>
<dbReference type="Pfam" id="PF22740">
    <property type="entry name" value="PapZ_C"/>
    <property type="match status" value="1"/>
</dbReference>
<dbReference type="Pfam" id="PF03668">
    <property type="entry name" value="RapZ-like_N"/>
    <property type="match status" value="1"/>
</dbReference>
<dbReference type="PIRSF" id="PIRSF005052">
    <property type="entry name" value="P-loopkin"/>
    <property type="match status" value="1"/>
</dbReference>
<dbReference type="SUPFAM" id="SSF52540">
    <property type="entry name" value="P-loop containing nucleoside triphosphate hydrolases"/>
    <property type="match status" value="1"/>
</dbReference>
<feature type="chain" id="PRO_0000258949" description="Nucleotide-binding protein BTH_I0482">
    <location>
        <begin position="1"/>
        <end position="297"/>
    </location>
</feature>
<feature type="binding site" evidence="1">
    <location>
        <begin position="8"/>
        <end position="15"/>
    </location>
    <ligand>
        <name>ATP</name>
        <dbReference type="ChEBI" id="CHEBI:30616"/>
    </ligand>
</feature>
<feature type="binding site" evidence="1">
    <location>
        <begin position="57"/>
        <end position="60"/>
    </location>
    <ligand>
        <name>GTP</name>
        <dbReference type="ChEBI" id="CHEBI:37565"/>
    </ligand>
</feature>
<gene>
    <name type="ordered locus">BTH_I0482</name>
</gene>